<evidence type="ECO:0000255" key="1">
    <source>
        <dbReference type="HAMAP-Rule" id="MF_00044"/>
    </source>
</evidence>
<keyword id="KW-0030">Aminoacyl-tRNA synthetase</keyword>
<keyword id="KW-0067">ATP-binding</keyword>
<keyword id="KW-0963">Cytoplasm</keyword>
<keyword id="KW-0436">Ligase</keyword>
<keyword id="KW-0547">Nucleotide-binding</keyword>
<keyword id="KW-0648">Protein biosynthesis</keyword>
<keyword id="KW-1185">Reference proteome</keyword>
<reference key="1">
    <citation type="submission" date="2007-08" db="EMBL/GenBank/DDBJ databases">
        <authorList>
            <consortium name="The Citrobacter koseri Genome Sequencing Project"/>
            <person name="McClelland M."/>
            <person name="Sanderson E.K."/>
            <person name="Porwollik S."/>
            <person name="Spieth J."/>
            <person name="Clifton W.S."/>
            <person name="Latreille P."/>
            <person name="Courtney L."/>
            <person name="Wang C."/>
            <person name="Pepin K."/>
            <person name="Bhonagiri V."/>
            <person name="Nash W."/>
            <person name="Johnson M."/>
            <person name="Thiruvilangam P."/>
            <person name="Wilson R."/>
        </authorList>
    </citation>
    <scope>NUCLEOTIDE SEQUENCE [LARGE SCALE GENOMIC DNA]</scope>
    <source>
        <strain>ATCC BAA-895 / CDC 4225-83 / SGSC4696</strain>
    </source>
</reference>
<organism>
    <name type="scientific">Citrobacter koseri (strain ATCC BAA-895 / CDC 4225-83 / SGSC4696)</name>
    <dbReference type="NCBI Taxonomy" id="290338"/>
    <lineage>
        <taxon>Bacteria</taxon>
        <taxon>Pseudomonadati</taxon>
        <taxon>Pseudomonadota</taxon>
        <taxon>Gammaproteobacteria</taxon>
        <taxon>Enterobacterales</taxon>
        <taxon>Enterobacteriaceae</taxon>
        <taxon>Citrobacter</taxon>
    </lineage>
</organism>
<accession>A8AFH5</accession>
<comment type="function">
    <text evidence="1">Catalyzes the attachment of L-aspartate to tRNA(Asp) in a two-step reaction: L-aspartate is first activated by ATP to form Asp-AMP and then transferred to the acceptor end of tRNA(Asp).</text>
</comment>
<comment type="catalytic activity">
    <reaction evidence="1">
        <text>tRNA(Asp) + L-aspartate + ATP = L-aspartyl-tRNA(Asp) + AMP + diphosphate</text>
        <dbReference type="Rhea" id="RHEA:19649"/>
        <dbReference type="Rhea" id="RHEA-COMP:9660"/>
        <dbReference type="Rhea" id="RHEA-COMP:9678"/>
        <dbReference type="ChEBI" id="CHEBI:29991"/>
        <dbReference type="ChEBI" id="CHEBI:30616"/>
        <dbReference type="ChEBI" id="CHEBI:33019"/>
        <dbReference type="ChEBI" id="CHEBI:78442"/>
        <dbReference type="ChEBI" id="CHEBI:78516"/>
        <dbReference type="ChEBI" id="CHEBI:456215"/>
        <dbReference type="EC" id="6.1.1.12"/>
    </reaction>
</comment>
<comment type="subunit">
    <text evidence="1">Homodimer.</text>
</comment>
<comment type="subcellular location">
    <subcellularLocation>
        <location evidence="1">Cytoplasm</location>
    </subcellularLocation>
</comment>
<comment type="similarity">
    <text evidence="1">Belongs to the class-II aminoacyl-tRNA synthetase family. Type 1 subfamily.</text>
</comment>
<protein>
    <recommendedName>
        <fullName evidence="1">Aspartate--tRNA ligase</fullName>
        <ecNumber evidence="1">6.1.1.12</ecNumber>
    </recommendedName>
    <alternativeName>
        <fullName evidence="1">Aspartyl-tRNA synthetase</fullName>
        <shortName evidence="1">AspRS</shortName>
    </alternativeName>
</protein>
<feature type="chain" id="PRO_1000006660" description="Aspartate--tRNA ligase">
    <location>
        <begin position="1"/>
        <end position="590"/>
    </location>
</feature>
<feature type="region of interest" description="Aspartate" evidence="1">
    <location>
        <begin position="195"/>
        <end position="198"/>
    </location>
</feature>
<feature type="binding site" evidence="1">
    <location>
        <position position="171"/>
    </location>
    <ligand>
        <name>L-aspartate</name>
        <dbReference type="ChEBI" id="CHEBI:29991"/>
    </ligand>
</feature>
<feature type="binding site" evidence="1">
    <location>
        <begin position="217"/>
        <end position="219"/>
    </location>
    <ligand>
        <name>ATP</name>
        <dbReference type="ChEBI" id="CHEBI:30616"/>
    </ligand>
</feature>
<feature type="binding site" evidence="1">
    <location>
        <position position="217"/>
    </location>
    <ligand>
        <name>L-aspartate</name>
        <dbReference type="ChEBI" id="CHEBI:29991"/>
    </ligand>
</feature>
<feature type="binding site" evidence="1">
    <location>
        <position position="226"/>
    </location>
    <ligand>
        <name>ATP</name>
        <dbReference type="ChEBI" id="CHEBI:30616"/>
    </ligand>
</feature>
<feature type="binding site" evidence="1">
    <location>
        <position position="448"/>
    </location>
    <ligand>
        <name>L-aspartate</name>
        <dbReference type="ChEBI" id="CHEBI:29991"/>
    </ligand>
</feature>
<feature type="binding site" evidence="1">
    <location>
        <position position="482"/>
    </location>
    <ligand>
        <name>ATP</name>
        <dbReference type="ChEBI" id="CHEBI:30616"/>
    </ligand>
</feature>
<feature type="binding site" evidence="1">
    <location>
        <position position="489"/>
    </location>
    <ligand>
        <name>L-aspartate</name>
        <dbReference type="ChEBI" id="CHEBI:29991"/>
    </ligand>
</feature>
<feature type="binding site" evidence="1">
    <location>
        <begin position="534"/>
        <end position="537"/>
    </location>
    <ligand>
        <name>ATP</name>
        <dbReference type="ChEBI" id="CHEBI:30616"/>
    </ligand>
</feature>
<proteinExistence type="inferred from homology"/>
<sequence length="590" mass="65662">MRTEYCGQLRLSHVGQQVTLCGWVNRRRDLGSLIFIDMRDREGIVQVFFDPDRADALKLASELRNEFCIQVTGTVRARDEKNVNADMATGEIEVLASDLTIINRADSLPLDSNHVNTEEARLKYRYLDLRRPEMAQRLKTRAKITSLVRRFMDDHGFLDIETPMLTKATPEGARDYLVPSRVHKGKFYALPQSPQLFKQLLMMSGFDRYYQIVKCFRDEDLRADRQPEFTQIDVETSFMTAPQVREVMEALVRHLWQEVKGVDLGDFPIMTFAEAERRYGSDKPDLRNPMELVDVADLLKSVEFAVFAGPANDPKGRVAALRVPGGASLSRKQIDDYGNFIKIYGAKGLAYIKVTERAKGLEGINSPVAKFLNAEIVEAILDRTAAQDGDMIFFGADNKKVVADALGALRLKVGKDLNLTDEAKWAPLWVIDFPMFEDDGEGGLTAMHHPFTSPKDLTAAELKAAPENAVANAYDMVINGYEVGGGSVRIHSGDMQQTVFGILGINEQEQREKFGFLLDALKYGTPPHAGLAFGLDRLTMLLTGTDNIRDVIAFPKTTAAACLMTEAPSFANPAALAELGIDVVKKAENN</sequence>
<name>SYD_CITK8</name>
<gene>
    <name evidence="1" type="primary">aspS</name>
    <name type="ordered locus">CKO_01095</name>
</gene>
<dbReference type="EC" id="6.1.1.12" evidence="1"/>
<dbReference type="EMBL" id="CP000822">
    <property type="protein sequence ID" value="ABV12238.1"/>
    <property type="molecule type" value="Genomic_DNA"/>
</dbReference>
<dbReference type="RefSeq" id="WP_012131992.1">
    <property type="nucleotide sequence ID" value="NC_009792.1"/>
</dbReference>
<dbReference type="SMR" id="A8AFH5"/>
<dbReference type="STRING" id="290338.CKO_01095"/>
<dbReference type="GeneID" id="45135244"/>
<dbReference type="KEGG" id="cko:CKO_01095"/>
<dbReference type="HOGENOM" id="CLU_014330_3_2_6"/>
<dbReference type="OrthoDB" id="9802326at2"/>
<dbReference type="Proteomes" id="UP000008148">
    <property type="component" value="Chromosome"/>
</dbReference>
<dbReference type="GO" id="GO:0005737">
    <property type="term" value="C:cytoplasm"/>
    <property type="evidence" value="ECO:0007669"/>
    <property type="project" value="UniProtKB-SubCell"/>
</dbReference>
<dbReference type="GO" id="GO:0004815">
    <property type="term" value="F:aspartate-tRNA ligase activity"/>
    <property type="evidence" value="ECO:0007669"/>
    <property type="project" value="UniProtKB-UniRule"/>
</dbReference>
<dbReference type="GO" id="GO:0005524">
    <property type="term" value="F:ATP binding"/>
    <property type="evidence" value="ECO:0007669"/>
    <property type="project" value="UniProtKB-UniRule"/>
</dbReference>
<dbReference type="GO" id="GO:0003676">
    <property type="term" value="F:nucleic acid binding"/>
    <property type="evidence" value="ECO:0007669"/>
    <property type="project" value="InterPro"/>
</dbReference>
<dbReference type="GO" id="GO:0006422">
    <property type="term" value="P:aspartyl-tRNA aminoacylation"/>
    <property type="evidence" value="ECO:0007669"/>
    <property type="project" value="UniProtKB-UniRule"/>
</dbReference>
<dbReference type="CDD" id="cd00777">
    <property type="entry name" value="AspRS_core"/>
    <property type="match status" value="1"/>
</dbReference>
<dbReference type="CDD" id="cd04317">
    <property type="entry name" value="EcAspRS_like_N"/>
    <property type="match status" value="1"/>
</dbReference>
<dbReference type="FunFam" id="2.40.50.140:FF:000080">
    <property type="entry name" value="Aspartate--tRNA ligase"/>
    <property type="match status" value="1"/>
</dbReference>
<dbReference type="FunFam" id="3.30.1360.30:FF:000001">
    <property type="entry name" value="Aspartate--tRNA ligase"/>
    <property type="match status" value="1"/>
</dbReference>
<dbReference type="Gene3D" id="3.30.930.10">
    <property type="entry name" value="Bira Bifunctional Protein, Domain 2"/>
    <property type="match status" value="1"/>
</dbReference>
<dbReference type="Gene3D" id="3.30.1360.30">
    <property type="entry name" value="GAD-like domain"/>
    <property type="match status" value="1"/>
</dbReference>
<dbReference type="Gene3D" id="2.40.50.140">
    <property type="entry name" value="Nucleic acid-binding proteins"/>
    <property type="match status" value="1"/>
</dbReference>
<dbReference type="HAMAP" id="MF_00044">
    <property type="entry name" value="Asp_tRNA_synth_type1"/>
    <property type="match status" value="1"/>
</dbReference>
<dbReference type="InterPro" id="IPR004364">
    <property type="entry name" value="Aa-tRNA-synt_II"/>
</dbReference>
<dbReference type="InterPro" id="IPR006195">
    <property type="entry name" value="aa-tRNA-synth_II"/>
</dbReference>
<dbReference type="InterPro" id="IPR045864">
    <property type="entry name" value="aa-tRNA-synth_II/BPL/LPL"/>
</dbReference>
<dbReference type="InterPro" id="IPR004524">
    <property type="entry name" value="Asp-tRNA-ligase_1"/>
</dbReference>
<dbReference type="InterPro" id="IPR047089">
    <property type="entry name" value="Asp-tRNA-ligase_1_N"/>
</dbReference>
<dbReference type="InterPro" id="IPR002312">
    <property type="entry name" value="Asp/Asn-tRNA-synth_IIb"/>
</dbReference>
<dbReference type="InterPro" id="IPR047090">
    <property type="entry name" value="AspRS_core"/>
</dbReference>
<dbReference type="InterPro" id="IPR004115">
    <property type="entry name" value="GAD-like_sf"/>
</dbReference>
<dbReference type="InterPro" id="IPR029351">
    <property type="entry name" value="GAD_dom"/>
</dbReference>
<dbReference type="InterPro" id="IPR012340">
    <property type="entry name" value="NA-bd_OB-fold"/>
</dbReference>
<dbReference type="InterPro" id="IPR004365">
    <property type="entry name" value="NA-bd_OB_tRNA"/>
</dbReference>
<dbReference type="NCBIfam" id="TIGR00459">
    <property type="entry name" value="aspS_bact"/>
    <property type="match status" value="1"/>
</dbReference>
<dbReference type="NCBIfam" id="NF001750">
    <property type="entry name" value="PRK00476.1"/>
    <property type="match status" value="1"/>
</dbReference>
<dbReference type="PANTHER" id="PTHR22594:SF5">
    <property type="entry name" value="ASPARTATE--TRNA LIGASE, MITOCHONDRIAL"/>
    <property type="match status" value="1"/>
</dbReference>
<dbReference type="PANTHER" id="PTHR22594">
    <property type="entry name" value="ASPARTYL/LYSYL-TRNA SYNTHETASE"/>
    <property type="match status" value="1"/>
</dbReference>
<dbReference type="Pfam" id="PF02938">
    <property type="entry name" value="GAD"/>
    <property type="match status" value="1"/>
</dbReference>
<dbReference type="Pfam" id="PF00152">
    <property type="entry name" value="tRNA-synt_2"/>
    <property type="match status" value="1"/>
</dbReference>
<dbReference type="Pfam" id="PF01336">
    <property type="entry name" value="tRNA_anti-codon"/>
    <property type="match status" value="1"/>
</dbReference>
<dbReference type="PRINTS" id="PR01042">
    <property type="entry name" value="TRNASYNTHASP"/>
</dbReference>
<dbReference type="SUPFAM" id="SSF55681">
    <property type="entry name" value="Class II aaRS and biotin synthetases"/>
    <property type="match status" value="1"/>
</dbReference>
<dbReference type="SUPFAM" id="SSF55261">
    <property type="entry name" value="GAD domain-like"/>
    <property type="match status" value="1"/>
</dbReference>
<dbReference type="SUPFAM" id="SSF50249">
    <property type="entry name" value="Nucleic acid-binding proteins"/>
    <property type="match status" value="1"/>
</dbReference>
<dbReference type="PROSITE" id="PS50862">
    <property type="entry name" value="AA_TRNA_LIGASE_II"/>
    <property type="match status" value="1"/>
</dbReference>